<name>IML2_CANGA</name>
<protein>
    <recommendedName>
        <fullName>Inclusion body clearance protein IML2</fullName>
    </recommendedName>
</protein>
<keyword id="KW-0963">Cytoplasm</keyword>
<keyword id="KW-0539">Nucleus</keyword>
<keyword id="KW-0597">Phosphoprotein</keyword>
<keyword id="KW-1185">Reference proteome</keyword>
<sequence>MFKVFGALSGKGSSDSNGNSTRSSINEKRTKLILKEANDFEIALRAMDYVLDDRTEEGLALLRENEKVNGQNQTITVLARGVIEFLQATLSFEMEEIKNASNTLAKAEQLSWKSRTEAQKSGIRNSSIYPPGTVYAVTYTESCLLHALLMLFTESMMDAAKALLKLRKAYSMLHEIMEVVKKSELSRKVSSSSAVSIQSNGSFVSEEATFVSADIPYQLSETESNDPELWAFAEKIYKMRKLRLSGAHIGNTPAISRLRSGLGLSASNKSEELANSEQSVLSDEAAERQATIDEFIHSGVNLCYGILQVVLSLIPPAIGAVLSIVGFRGSREEGLRLIWKATKDRNVHGCIGLLGLMFYYDGPFQFTDVDFDIPPALSNTKTSDSDTDRDGSISIDEMDGHALLHPGPILEEALLHARALFPNSALWLLNEARMLSSRGRLPEAIELLDSIDVESIHMRQVKGLLVFDKAITLVHMQEYERAATNLLSLLKISDWSHAFYTYFAGCCYLENWRMAQMGFIKDDKLEFYREKAEELIFSAPKLLGKKTFKSKNLPLDRFMLRKVEQFKATQKKLGVKNILDAIGTSPIREITYFYNGYNRMSKSDLEIAQKMLTSYHNPAIDQHDPDQELIKNLLLSLTMRRLGDVESGVKLLDEKVLPSIYYMQNGKVKYIKKTEDPWAYPTALYERALFTWKLDGVDNLSECRHWLVTAQNYAGDYELSTRVGMKIKAALDRVEESLQHGTA</sequence>
<evidence type="ECO:0000250" key="1">
    <source>
        <dbReference type="UniProtKB" id="P47031"/>
    </source>
</evidence>
<evidence type="ECO:0000256" key="2">
    <source>
        <dbReference type="SAM" id="MobiDB-lite"/>
    </source>
</evidence>
<evidence type="ECO:0000305" key="3"/>
<gene>
    <name type="primary">IML2</name>
    <name type="ordered locus">CAGL0M03179g</name>
</gene>
<dbReference type="EMBL" id="CR380959">
    <property type="protein sequence ID" value="CAG62461.1"/>
    <property type="molecule type" value="Genomic_DNA"/>
</dbReference>
<dbReference type="RefSeq" id="XP_449485.1">
    <property type="nucleotide sequence ID" value="XM_449485.1"/>
</dbReference>
<dbReference type="FunCoup" id="Q6FJV9">
    <property type="interactions" value="51"/>
</dbReference>
<dbReference type="EnsemblFungi" id="CAGL0M03179g-T">
    <property type="protein sequence ID" value="CAGL0M03179g-T-p1"/>
    <property type="gene ID" value="CAGL0M03179g"/>
</dbReference>
<dbReference type="KEGG" id="cgr:2891493"/>
<dbReference type="CGD" id="CAL0136953">
    <property type="gene designation" value="CAGL0M03179g"/>
</dbReference>
<dbReference type="VEuPathDB" id="FungiDB:B1J91_M03179g"/>
<dbReference type="VEuPathDB" id="FungiDB:CAGL0M03179g"/>
<dbReference type="eggNOG" id="KOG3783">
    <property type="taxonomic scope" value="Eukaryota"/>
</dbReference>
<dbReference type="HOGENOM" id="CLU_014926_0_0_1"/>
<dbReference type="InParanoid" id="Q6FJV9"/>
<dbReference type="OMA" id="WNGYNRM"/>
<dbReference type="Proteomes" id="UP000002428">
    <property type="component" value="Chromosome M"/>
</dbReference>
<dbReference type="GO" id="GO:0005829">
    <property type="term" value="C:cytosol"/>
    <property type="evidence" value="ECO:0007669"/>
    <property type="project" value="TreeGrafter"/>
</dbReference>
<dbReference type="GO" id="GO:0005741">
    <property type="term" value="C:mitochondrial outer membrane"/>
    <property type="evidence" value="ECO:0007669"/>
    <property type="project" value="TreeGrafter"/>
</dbReference>
<dbReference type="GO" id="GO:0005634">
    <property type="term" value="C:nucleus"/>
    <property type="evidence" value="ECO:0007669"/>
    <property type="project" value="UniProtKB-SubCell"/>
</dbReference>
<dbReference type="GO" id="GO:0071218">
    <property type="term" value="P:cellular response to misfolded protein"/>
    <property type="evidence" value="ECO:0007669"/>
    <property type="project" value="EnsemblFungi"/>
</dbReference>
<dbReference type="InterPro" id="IPR018247">
    <property type="entry name" value="EF_Hand_1_Ca_BS"/>
</dbReference>
<dbReference type="InterPro" id="IPR019412">
    <property type="entry name" value="Iml2/TPR_39"/>
</dbReference>
<dbReference type="InterPro" id="IPR011990">
    <property type="entry name" value="TPR-like_helical_dom_sf"/>
</dbReference>
<dbReference type="PANTHER" id="PTHR31859">
    <property type="entry name" value="TETRATRICOPEPTIDE REPEAT PROTEIN 39 FAMILY MEMBER"/>
    <property type="match status" value="1"/>
</dbReference>
<dbReference type="PANTHER" id="PTHR31859:SF1">
    <property type="entry name" value="TETRATRICOPEPTIDE REPEAT PROTEIN 39C"/>
    <property type="match status" value="1"/>
</dbReference>
<dbReference type="Pfam" id="PF10300">
    <property type="entry name" value="Iml2-TPR_39"/>
    <property type="match status" value="1"/>
</dbReference>
<dbReference type="SUPFAM" id="SSF48452">
    <property type="entry name" value="TPR-like"/>
    <property type="match status" value="1"/>
</dbReference>
<feature type="chain" id="PRO_0000333345" description="Inclusion body clearance protein IML2">
    <location>
        <begin position="1"/>
        <end position="743"/>
    </location>
</feature>
<feature type="region of interest" description="Disordered" evidence="2">
    <location>
        <begin position="1"/>
        <end position="25"/>
    </location>
</feature>
<feature type="compositionally biased region" description="Low complexity" evidence="2">
    <location>
        <begin position="10"/>
        <end position="24"/>
    </location>
</feature>
<accession>Q6FJV9</accession>
<comment type="function">
    <text evidence="1">Inclusion body (IB) resident protein that interacts strongly with lipid droplet (LD) proteins. Involved in LD-mediated IB clearing after protein folding stress, probably by enabling access to the IBs of an LD-stored soluble sterol derivative that acts as a chaperone in inclusion clearing.</text>
</comment>
<comment type="subunit">
    <text evidence="1">Interacts with lipid droplet proteins.</text>
</comment>
<comment type="subcellular location">
    <subcellularLocation>
        <location evidence="1">Cytoplasm</location>
    </subcellularLocation>
    <subcellularLocation>
        <location evidence="1">Nucleus</location>
    </subcellularLocation>
    <text evidence="1">Localized exclusively in cytoplasmic inclusion bodies under protein folding stress conditions.</text>
</comment>
<comment type="similarity">
    <text evidence="3">Belongs to the IML2 family.</text>
</comment>
<proteinExistence type="inferred from homology"/>
<reference key="1">
    <citation type="journal article" date="2004" name="Nature">
        <title>Genome evolution in yeasts.</title>
        <authorList>
            <person name="Dujon B."/>
            <person name="Sherman D."/>
            <person name="Fischer G."/>
            <person name="Durrens P."/>
            <person name="Casaregola S."/>
            <person name="Lafontaine I."/>
            <person name="de Montigny J."/>
            <person name="Marck C."/>
            <person name="Neuveglise C."/>
            <person name="Talla E."/>
            <person name="Goffard N."/>
            <person name="Frangeul L."/>
            <person name="Aigle M."/>
            <person name="Anthouard V."/>
            <person name="Babour A."/>
            <person name="Barbe V."/>
            <person name="Barnay S."/>
            <person name="Blanchin S."/>
            <person name="Beckerich J.-M."/>
            <person name="Beyne E."/>
            <person name="Bleykasten C."/>
            <person name="Boisrame A."/>
            <person name="Boyer J."/>
            <person name="Cattolico L."/>
            <person name="Confanioleri F."/>
            <person name="de Daruvar A."/>
            <person name="Despons L."/>
            <person name="Fabre E."/>
            <person name="Fairhead C."/>
            <person name="Ferry-Dumazet H."/>
            <person name="Groppi A."/>
            <person name="Hantraye F."/>
            <person name="Hennequin C."/>
            <person name="Jauniaux N."/>
            <person name="Joyet P."/>
            <person name="Kachouri R."/>
            <person name="Kerrest A."/>
            <person name="Koszul R."/>
            <person name="Lemaire M."/>
            <person name="Lesur I."/>
            <person name="Ma L."/>
            <person name="Muller H."/>
            <person name="Nicaud J.-M."/>
            <person name="Nikolski M."/>
            <person name="Oztas S."/>
            <person name="Ozier-Kalogeropoulos O."/>
            <person name="Pellenz S."/>
            <person name="Potier S."/>
            <person name="Richard G.-F."/>
            <person name="Straub M.-L."/>
            <person name="Suleau A."/>
            <person name="Swennen D."/>
            <person name="Tekaia F."/>
            <person name="Wesolowski-Louvel M."/>
            <person name="Westhof E."/>
            <person name="Wirth B."/>
            <person name="Zeniou-Meyer M."/>
            <person name="Zivanovic Y."/>
            <person name="Bolotin-Fukuhara M."/>
            <person name="Thierry A."/>
            <person name="Bouchier C."/>
            <person name="Caudron B."/>
            <person name="Scarpelli C."/>
            <person name="Gaillardin C."/>
            <person name="Weissenbach J."/>
            <person name="Wincker P."/>
            <person name="Souciet J.-L."/>
        </authorList>
    </citation>
    <scope>NUCLEOTIDE SEQUENCE [LARGE SCALE GENOMIC DNA]</scope>
    <source>
        <strain>ATCC 2001 / BCRC 20586 / JCM 3761 / NBRC 0622 / NRRL Y-65 / CBS 138</strain>
    </source>
</reference>
<organism>
    <name type="scientific">Candida glabrata (strain ATCC 2001 / BCRC 20586 / JCM 3761 / NBRC 0622 / NRRL Y-65 / CBS 138)</name>
    <name type="common">Yeast</name>
    <name type="synonym">Nakaseomyces glabratus</name>
    <dbReference type="NCBI Taxonomy" id="284593"/>
    <lineage>
        <taxon>Eukaryota</taxon>
        <taxon>Fungi</taxon>
        <taxon>Dikarya</taxon>
        <taxon>Ascomycota</taxon>
        <taxon>Saccharomycotina</taxon>
        <taxon>Saccharomycetes</taxon>
        <taxon>Saccharomycetales</taxon>
        <taxon>Saccharomycetaceae</taxon>
        <taxon>Nakaseomyces</taxon>
    </lineage>
</organism>